<proteinExistence type="inferred from homology"/>
<dbReference type="EMBL" id="CP001022">
    <property type="protein sequence ID" value="ACB59586.1"/>
    <property type="molecule type" value="Genomic_DNA"/>
</dbReference>
<dbReference type="RefSeq" id="WP_012369012.1">
    <property type="nucleotide sequence ID" value="NC_010556.1"/>
</dbReference>
<dbReference type="SMR" id="B1YGV3"/>
<dbReference type="STRING" id="262543.Exig_0099"/>
<dbReference type="KEGG" id="esi:Exig_0099"/>
<dbReference type="eggNOG" id="COG0090">
    <property type="taxonomic scope" value="Bacteria"/>
</dbReference>
<dbReference type="HOGENOM" id="CLU_036235_2_1_9"/>
<dbReference type="OrthoDB" id="9778722at2"/>
<dbReference type="Proteomes" id="UP000001681">
    <property type="component" value="Chromosome"/>
</dbReference>
<dbReference type="GO" id="GO:0015934">
    <property type="term" value="C:large ribosomal subunit"/>
    <property type="evidence" value="ECO:0007669"/>
    <property type="project" value="InterPro"/>
</dbReference>
<dbReference type="GO" id="GO:0019843">
    <property type="term" value="F:rRNA binding"/>
    <property type="evidence" value="ECO:0007669"/>
    <property type="project" value="UniProtKB-UniRule"/>
</dbReference>
<dbReference type="GO" id="GO:0003735">
    <property type="term" value="F:structural constituent of ribosome"/>
    <property type="evidence" value="ECO:0007669"/>
    <property type="project" value="InterPro"/>
</dbReference>
<dbReference type="GO" id="GO:0016740">
    <property type="term" value="F:transferase activity"/>
    <property type="evidence" value="ECO:0007669"/>
    <property type="project" value="InterPro"/>
</dbReference>
<dbReference type="GO" id="GO:0002181">
    <property type="term" value="P:cytoplasmic translation"/>
    <property type="evidence" value="ECO:0007669"/>
    <property type="project" value="TreeGrafter"/>
</dbReference>
<dbReference type="FunFam" id="2.30.30.30:FF:000001">
    <property type="entry name" value="50S ribosomal protein L2"/>
    <property type="match status" value="1"/>
</dbReference>
<dbReference type="FunFam" id="2.40.50.140:FF:000003">
    <property type="entry name" value="50S ribosomal protein L2"/>
    <property type="match status" value="1"/>
</dbReference>
<dbReference type="FunFam" id="4.10.950.10:FF:000001">
    <property type="entry name" value="50S ribosomal protein L2"/>
    <property type="match status" value="1"/>
</dbReference>
<dbReference type="Gene3D" id="2.30.30.30">
    <property type="match status" value="1"/>
</dbReference>
<dbReference type="Gene3D" id="2.40.50.140">
    <property type="entry name" value="Nucleic acid-binding proteins"/>
    <property type="match status" value="1"/>
</dbReference>
<dbReference type="Gene3D" id="4.10.950.10">
    <property type="entry name" value="Ribosomal protein L2, domain 3"/>
    <property type="match status" value="1"/>
</dbReference>
<dbReference type="HAMAP" id="MF_01320_B">
    <property type="entry name" value="Ribosomal_uL2_B"/>
    <property type="match status" value="1"/>
</dbReference>
<dbReference type="InterPro" id="IPR012340">
    <property type="entry name" value="NA-bd_OB-fold"/>
</dbReference>
<dbReference type="InterPro" id="IPR014722">
    <property type="entry name" value="Rib_uL2_dom2"/>
</dbReference>
<dbReference type="InterPro" id="IPR002171">
    <property type="entry name" value="Ribosomal_uL2"/>
</dbReference>
<dbReference type="InterPro" id="IPR005880">
    <property type="entry name" value="Ribosomal_uL2_bac/org-type"/>
</dbReference>
<dbReference type="InterPro" id="IPR022669">
    <property type="entry name" value="Ribosomal_uL2_C"/>
</dbReference>
<dbReference type="InterPro" id="IPR022671">
    <property type="entry name" value="Ribosomal_uL2_CS"/>
</dbReference>
<dbReference type="InterPro" id="IPR014726">
    <property type="entry name" value="Ribosomal_uL2_dom3"/>
</dbReference>
<dbReference type="InterPro" id="IPR022666">
    <property type="entry name" value="Ribosomal_uL2_RNA-bd_dom"/>
</dbReference>
<dbReference type="InterPro" id="IPR008991">
    <property type="entry name" value="Translation_prot_SH3-like_sf"/>
</dbReference>
<dbReference type="NCBIfam" id="TIGR01171">
    <property type="entry name" value="rplB_bact"/>
    <property type="match status" value="1"/>
</dbReference>
<dbReference type="PANTHER" id="PTHR13691:SF5">
    <property type="entry name" value="LARGE RIBOSOMAL SUBUNIT PROTEIN UL2M"/>
    <property type="match status" value="1"/>
</dbReference>
<dbReference type="PANTHER" id="PTHR13691">
    <property type="entry name" value="RIBOSOMAL PROTEIN L2"/>
    <property type="match status" value="1"/>
</dbReference>
<dbReference type="Pfam" id="PF00181">
    <property type="entry name" value="Ribosomal_L2"/>
    <property type="match status" value="1"/>
</dbReference>
<dbReference type="Pfam" id="PF03947">
    <property type="entry name" value="Ribosomal_L2_C"/>
    <property type="match status" value="1"/>
</dbReference>
<dbReference type="PIRSF" id="PIRSF002158">
    <property type="entry name" value="Ribosomal_L2"/>
    <property type="match status" value="1"/>
</dbReference>
<dbReference type="SMART" id="SM01383">
    <property type="entry name" value="Ribosomal_L2"/>
    <property type="match status" value="1"/>
</dbReference>
<dbReference type="SMART" id="SM01382">
    <property type="entry name" value="Ribosomal_L2_C"/>
    <property type="match status" value="1"/>
</dbReference>
<dbReference type="SUPFAM" id="SSF50249">
    <property type="entry name" value="Nucleic acid-binding proteins"/>
    <property type="match status" value="1"/>
</dbReference>
<dbReference type="SUPFAM" id="SSF50104">
    <property type="entry name" value="Translation proteins SH3-like domain"/>
    <property type="match status" value="1"/>
</dbReference>
<dbReference type="PROSITE" id="PS00467">
    <property type="entry name" value="RIBOSOMAL_L2"/>
    <property type="match status" value="1"/>
</dbReference>
<evidence type="ECO:0000255" key="1">
    <source>
        <dbReference type="HAMAP-Rule" id="MF_01320"/>
    </source>
</evidence>
<evidence type="ECO:0000256" key="2">
    <source>
        <dbReference type="SAM" id="MobiDB-lite"/>
    </source>
</evidence>
<evidence type="ECO:0000305" key="3"/>
<gene>
    <name evidence="1" type="primary">rplB</name>
    <name type="ordered locus">Exig_0099</name>
</gene>
<comment type="function">
    <text evidence="1">One of the primary rRNA binding proteins. Required for association of the 30S and 50S subunits to form the 70S ribosome, for tRNA binding and peptide bond formation. It has been suggested to have peptidyltransferase activity; this is somewhat controversial. Makes several contacts with the 16S rRNA in the 70S ribosome.</text>
</comment>
<comment type="subunit">
    <text evidence="1">Part of the 50S ribosomal subunit. Forms a bridge to the 30S subunit in the 70S ribosome.</text>
</comment>
<comment type="similarity">
    <text evidence="1">Belongs to the universal ribosomal protein uL2 family.</text>
</comment>
<name>RL2_EXIS2</name>
<sequence length="276" mass="30083">MGIKKFKPTTNGRRNMTALDFAEITASRPEKSLTEKLSKKGGRNNQGRLTVRHQGGGHKRKYRIIDFKRNKDGIAGRIATIEYDPNRSANIALVHYIDGEKRYILAPKGLKVDMQVMSGVEADIKVGNALPLSNIPVGTLIHNIELKPGKGGQLVRSAGTSAQLLGKDGKYAIVRLQSGETRMILATCRATVGAVGNEEHELVNIGKAGRSRWLGKRPTVRGSVMNPVDHPHGGGEGRAPIGRSGPLTPWGKPALGYKTRKKNKASDKYIVRRSKK</sequence>
<keyword id="KW-1185">Reference proteome</keyword>
<keyword id="KW-0687">Ribonucleoprotein</keyword>
<keyword id="KW-0689">Ribosomal protein</keyword>
<keyword id="KW-0694">RNA-binding</keyword>
<keyword id="KW-0699">rRNA-binding</keyword>
<accession>B1YGV3</accession>
<protein>
    <recommendedName>
        <fullName evidence="1">Large ribosomal subunit protein uL2</fullName>
    </recommendedName>
    <alternativeName>
        <fullName evidence="3">50S ribosomal protein L2</fullName>
    </alternativeName>
</protein>
<organism>
    <name type="scientific">Exiguobacterium sibiricum (strain DSM 17290 / CCUG 55495 / CIP 109462 / JCM 13490 / 255-15)</name>
    <dbReference type="NCBI Taxonomy" id="262543"/>
    <lineage>
        <taxon>Bacteria</taxon>
        <taxon>Bacillati</taxon>
        <taxon>Bacillota</taxon>
        <taxon>Bacilli</taxon>
        <taxon>Bacillales</taxon>
        <taxon>Bacillales Family XII. Incertae Sedis</taxon>
        <taxon>Exiguobacterium</taxon>
    </lineage>
</organism>
<reference key="1">
    <citation type="submission" date="2008-04" db="EMBL/GenBank/DDBJ databases">
        <title>Complete sequence of chromosome of Exiguobacterium sibiricum 255-15.</title>
        <authorList>
            <consortium name="US DOE Joint Genome Institute"/>
            <person name="Copeland A."/>
            <person name="Lucas S."/>
            <person name="Lapidus A."/>
            <person name="Glavina del Rio T."/>
            <person name="Dalin E."/>
            <person name="Tice H."/>
            <person name="Bruce D."/>
            <person name="Goodwin L."/>
            <person name="Pitluck S."/>
            <person name="Kiss H."/>
            <person name="Chertkov O."/>
            <person name="Monk C."/>
            <person name="Brettin T."/>
            <person name="Detter J.C."/>
            <person name="Han C."/>
            <person name="Kuske C.R."/>
            <person name="Schmutz J."/>
            <person name="Larimer F."/>
            <person name="Land M."/>
            <person name="Hauser L."/>
            <person name="Kyrpides N."/>
            <person name="Mikhailova N."/>
            <person name="Vishnivetskaya T."/>
            <person name="Rodrigues D.F."/>
            <person name="Gilichinsky D."/>
            <person name="Tiedje J."/>
            <person name="Richardson P."/>
        </authorList>
    </citation>
    <scope>NUCLEOTIDE SEQUENCE [LARGE SCALE GENOMIC DNA]</scope>
    <source>
        <strain>DSM 17290 / CCUG 55495 / CIP 109462 / JCM 13490 / 255-15</strain>
    </source>
</reference>
<feature type="chain" id="PRO_1000141554" description="Large ribosomal subunit protein uL2">
    <location>
        <begin position="1"/>
        <end position="276"/>
    </location>
</feature>
<feature type="region of interest" description="Disordered" evidence="2">
    <location>
        <begin position="30"/>
        <end position="57"/>
    </location>
</feature>
<feature type="region of interest" description="Disordered" evidence="2">
    <location>
        <begin position="219"/>
        <end position="276"/>
    </location>
</feature>